<sequence length="834" mass="93030">MALVSPIPAMGERAGSMRFHGIGSPGSRSSRSGIMDEPVSRLIDEKIFVAVDKHVAKSKSTLIWALQNTGGKKICLIHVHQPSQMIPLMGAKFPVGAVKEEEVRVFREKEREKVHMILDDYLRICQQRGVRAEKMFIEMESIENGIVQLISELGIRKLVMGAAADRHYSRRMTDLKSRKAIFVRREAPTLCQIWFTCKGYLIHTREATMDDTESEYASPRPSISASDLLQTFSTPESEHQHISRVQSTDSVQQLVSNGSSTEQSGRVSDGSLNTDEEERESDGSEVTGSATVMSSGHSSPSSFPDGVDDSFNVKIRKATSEAHSSKQEAFAETLRRQKAEKNALDAIRRAKQSESAYSEELKRRKDTEIAVAKEKERFITIKNEQEVIMEELQSAMAQKAMLESQIAKSDGTMEKLNQKLDIAVKLLQKLRDEREELQTERDRALREAEELRSHAETSTLQLPQYFTDFSFSEIEEATNHFDSTLKIGEGGYGSIYVGLLRHTQVAIKMLNPNSSQGPVEYQQEVDVLSKMRHPNIITLIGACPEGWSLVYEYLPGGSLEDRLTCKDNSPPLSWQNRVRIATEICAALVFLHSNKAHSLVHGDLKPANILLDSNLVSKLSDFGTCSLLHPNGSKSVRTDVTGTVAYLDPEASSSGELTPKSDVYSFGIILLRLLTGRPALRISNEVKYALDNGTLNDLLDPLAGDWPFVQAEQLARLALRCCETVSENRPDLGTEVWRVLEPMRASSGGSSSFHLGRNEHRIAPPYFICPIFQEVMQDPHVAADGFTYEAEAIRAWLDSEHDTSPMTNVKLSHTSLIANHALRSAIQEWLQHHL</sequence>
<evidence type="ECO:0000250" key="1"/>
<evidence type="ECO:0000255" key="2"/>
<evidence type="ECO:0000255" key="3">
    <source>
        <dbReference type="PROSITE-ProRule" id="PRU00159"/>
    </source>
</evidence>
<evidence type="ECO:0000255" key="4">
    <source>
        <dbReference type="PROSITE-ProRule" id="PRU10027"/>
    </source>
</evidence>
<evidence type="ECO:0000256" key="5">
    <source>
        <dbReference type="SAM" id="MobiDB-lite"/>
    </source>
</evidence>
<evidence type="ECO:0000305" key="6"/>
<protein>
    <recommendedName>
        <fullName>U-box domain-containing protein 33</fullName>
    </recommendedName>
    <alternativeName>
        <fullName>Plant U-box protein 33</fullName>
    </alternativeName>
    <domain>
        <recommendedName>
            <fullName>E3 ubiquitin ligase</fullName>
            <ecNumber>2.3.2.27</ecNumber>
        </recommendedName>
        <alternativeName>
            <fullName evidence="6">RING-type E3 ubiquitin transferase</fullName>
        </alternativeName>
    </domain>
    <domain>
        <recommendedName>
            <fullName>Serine/threonine-protein kinase</fullName>
            <ecNumber>2.7.11.-</ecNumber>
        </recommendedName>
    </domain>
</protein>
<keyword id="KW-0067">ATP-binding</keyword>
<keyword id="KW-0175">Coiled coil</keyword>
<keyword id="KW-0418">Kinase</keyword>
<keyword id="KW-0547">Nucleotide-binding</keyword>
<keyword id="KW-1185">Reference proteome</keyword>
<keyword id="KW-0723">Serine/threonine-protein kinase</keyword>
<keyword id="KW-0808">Transferase</keyword>
<keyword id="KW-0833">Ubl conjugation pathway</keyword>
<dbReference type="EC" id="2.3.2.27"/>
<dbReference type="EC" id="2.7.11.-"/>
<dbReference type="EMBL" id="AC004665">
    <property type="protein sequence ID" value="AAC28534.1"/>
    <property type="status" value="ALT_SEQ"/>
    <property type="molecule type" value="Genomic_DNA"/>
</dbReference>
<dbReference type="EMBL" id="CP002685">
    <property type="protein sequence ID" value="AEC10616.1"/>
    <property type="molecule type" value="Genomic_DNA"/>
</dbReference>
<dbReference type="EMBL" id="CP002685">
    <property type="protein sequence ID" value="ANM61922.1"/>
    <property type="molecule type" value="Genomic_DNA"/>
</dbReference>
<dbReference type="EMBL" id="BT002512">
    <property type="protein sequence ID" value="AAO00872.1"/>
    <property type="molecule type" value="mRNA"/>
</dbReference>
<dbReference type="EMBL" id="AK227123">
    <property type="protein sequence ID" value="BAE99173.1"/>
    <property type="molecule type" value="mRNA"/>
</dbReference>
<dbReference type="PIR" id="T02456">
    <property type="entry name" value="T02456"/>
</dbReference>
<dbReference type="RefSeq" id="NP_001324111.1">
    <property type="nucleotide sequence ID" value="NM_001337160.1"/>
</dbReference>
<dbReference type="RefSeq" id="NP_182115.2">
    <property type="nucleotide sequence ID" value="NM_130154.4"/>
</dbReference>
<dbReference type="SMR" id="Q8GUH1"/>
<dbReference type="BioGRID" id="4535">
    <property type="interactions" value="4"/>
</dbReference>
<dbReference type="FunCoup" id="Q8GUH1">
    <property type="interactions" value="976"/>
</dbReference>
<dbReference type="STRING" id="3702.Q8GUH1"/>
<dbReference type="iPTMnet" id="Q8GUH1"/>
<dbReference type="PaxDb" id="3702-AT2G45910.1"/>
<dbReference type="ProteomicsDB" id="226064"/>
<dbReference type="EnsemblPlants" id="AT2G45910.1">
    <property type="protein sequence ID" value="AT2G45910.1"/>
    <property type="gene ID" value="AT2G45910"/>
</dbReference>
<dbReference type="EnsemblPlants" id="AT2G45910.2">
    <property type="protein sequence ID" value="AT2G45910.2"/>
    <property type="gene ID" value="AT2G45910"/>
</dbReference>
<dbReference type="GeneID" id="819199"/>
<dbReference type="Gramene" id="AT2G45910.1">
    <property type="protein sequence ID" value="AT2G45910.1"/>
    <property type="gene ID" value="AT2G45910"/>
</dbReference>
<dbReference type="Gramene" id="AT2G45910.2">
    <property type="protein sequence ID" value="AT2G45910.2"/>
    <property type="gene ID" value="AT2G45910"/>
</dbReference>
<dbReference type="KEGG" id="ath:AT2G45910"/>
<dbReference type="Araport" id="AT2G45910"/>
<dbReference type="TAIR" id="AT2G45910"/>
<dbReference type="eggNOG" id="ENOG502QQ1P">
    <property type="taxonomic scope" value="Eukaryota"/>
</dbReference>
<dbReference type="HOGENOM" id="CLU_000288_153_0_1"/>
<dbReference type="InParanoid" id="Q8GUH1"/>
<dbReference type="OMA" id="VPAQMIT"/>
<dbReference type="OrthoDB" id="4062651at2759"/>
<dbReference type="PhylomeDB" id="Q8GUH1"/>
<dbReference type="UniPathway" id="UPA00143"/>
<dbReference type="PRO" id="PR:Q8GUH1"/>
<dbReference type="Proteomes" id="UP000006548">
    <property type="component" value="Chromosome 2"/>
</dbReference>
<dbReference type="ExpressionAtlas" id="Q8GUH1">
    <property type="expression patterns" value="baseline and differential"/>
</dbReference>
<dbReference type="GO" id="GO:0005829">
    <property type="term" value="C:cytosol"/>
    <property type="evidence" value="ECO:0007005"/>
    <property type="project" value="TAIR"/>
</dbReference>
<dbReference type="GO" id="GO:0005524">
    <property type="term" value="F:ATP binding"/>
    <property type="evidence" value="ECO:0007669"/>
    <property type="project" value="UniProtKB-KW"/>
</dbReference>
<dbReference type="GO" id="GO:0106310">
    <property type="term" value="F:protein serine kinase activity"/>
    <property type="evidence" value="ECO:0007669"/>
    <property type="project" value="RHEA"/>
</dbReference>
<dbReference type="GO" id="GO:0004674">
    <property type="term" value="F:protein serine/threonine kinase activity"/>
    <property type="evidence" value="ECO:0007669"/>
    <property type="project" value="UniProtKB-KW"/>
</dbReference>
<dbReference type="GO" id="GO:0004842">
    <property type="term" value="F:ubiquitin-protein transferase activity"/>
    <property type="evidence" value="ECO:0007669"/>
    <property type="project" value="InterPro"/>
</dbReference>
<dbReference type="GO" id="GO:0016567">
    <property type="term" value="P:protein ubiquitination"/>
    <property type="evidence" value="ECO:0007669"/>
    <property type="project" value="UniProtKB-UniPathway"/>
</dbReference>
<dbReference type="CDD" id="cd16655">
    <property type="entry name" value="RING-Ubox_WDSUB1-like"/>
    <property type="match status" value="1"/>
</dbReference>
<dbReference type="CDD" id="cd14066">
    <property type="entry name" value="STKc_IRAK"/>
    <property type="match status" value="1"/>
</dbReference>
<dbReference type="CDD" id="cd01989">
    <property type="entry name" value="USP_STK_Ubox_N"/>
    <property type="match status" value="1"/>
</dbReference>
<dbReference type="FunFam" id="3.30.200.20:FF:000039">
    <property type="entry name" value="receptor-like protein kinase FERONIA"/>
    <property type="match status" value="1"/>
</dbReference>
<dbReference type="Gene3D" id="3.40.50.620">
    <property type="entry name" value="HUPs"/>
    <property type="match status" value="1"/>
</dbReference>
<dbReference type="Gene3D" id="3.30.200.20">
    <property type="entry name" value="Phosphorylase Kinase, domain 1"/>
    <property type="match status" value="1"/>
</dbReference>
<dbReference type="Gene3D" id="1.10.510.10">
    <property type="entry name" value="Transferase(Phosphotransferase) domain 1"/>
    <property type="match status" value="1"/>
</dbReference>
<dbReference type="Gene3D" id="3.30.40.10">
    <property type="entry name" value="Zinc/RING finger domain, C3HC4 (zinc finger)"/>
    <property type="match status" value="1"/>
</dbReference>
<dbReference type="InterPro" id="IPR011009">
    <property type="entry name" value="Kinase-like_dom_sf"/>
</dbReference>
<dbReference type="InterPro" id="IPR000719">
    <property type="entry name" value="Prot_kinase_dom"/>
</dbReference>
<dbReference type="InterPro" id="IPR017441">
    <property type="entry name" value="Protein_kinase_ATP_BS"/>
</dbReference>
<dbReference type="InterPro" id="IPR014729">
    <property type="entry name" value="Rossmann-like_a/b/a_fold"/>
</dbReference>
<dbReference type="InterPro" id="IPR008271">
    <property type="entry name" value="Ser/Thr_kinase_AS"/>
</dbReference>
<dbReference type="InterPro" id="IPR051348">
    <property type="entry name" value="U-box_ubiquitin_ligases"/>
</dbReference>
<dbReference type="InterPro" id="IPR003613">
    <property type="entry name" value="Ubox_domain"/>
</dbReference>
<dbReference type="InterPro" id="IPR013083">
    <property type="entry name" value="Znf_RING/FYVE/PHD"/>
</dbReference>
<dbReference type="PANTHER" id="PTHR45647">
    <property type="entry name" value="OS02G0152300 PROTEIN"/>
    <property type="match status" value="1"/>
</dbReference>
<dbReference type="PANTHER" id="PTHR45647:SF100">
    <property type="entry name" value="U-BOX DOMAIN-CONTAINING PROTEIN 33"/>
    <property type="match status" value="1"/>
</dbReference>
<dbReference type="Pfam" id="PF00069">
    <property type="entry name" value="Pkinase"/>
    <property type="match status" value="1"/>
</dbReference>
<dbReference type="Pfam" id="PF04564">
    <property type="entry name" value="U-box"/>
    <property type="match status" value="1"/>
</dbReference>
<dbReference type="SMART" id="SM00220">
    <property type="entry name" value="S_TKc"/>
    <property type="match status" value="1"/>
</dbReference>
<dbReference type="SMART" id="SM00504">
    <property type="entry name" value="Ubox"/>
    <property type="match status" value="1"/>
</dbReference>
<dbReference type="SUPFAM" id="SSF52402">
    <property type="entry name" value="Adenine nucleotide alpha hydrolases-like"/>
    <property type="match status" value="1"/>
</dbReference>
<dbReference type="SUPFAM" id="SSF56112">
    <property type="entry name" value="Protein kinase-like (PK-like)"/>
    <property type="match status" value="1"/>
</dbReference>
<dbReference type="SUPFAM" id="SSF57850">
    <property type="entry name" value="RING/U-box"/>
    <property type="match status" value="1"/>
</dbReference>
<dbReference type="PROSITE" id="PS00107">
    <property type="entry name" value="PROTEIN_KINASE_ATP"/>
    <property type="match status" value="1"/>
</dbReference>
<dbReference type="PROSITE" id="PS50011">
    <property type="entry name" value="PROTEIN_KINASE_DOM"/>
    <property type="match status" value="1"/>
</dbReference>
<dbReference type="PROSITE" id="PS00108">
    <property type="entry name" value="PROTEIN_KINASE_ST"/>
    <property type="match status" value="1"/>
</dbReference>
<dbReference type="PROSITE" id="PS51698">
    <property type="entry name" value="U_BOX"/>
    <property type="match status" value="1"/>
</dbReference>
<name>PUB33_ARATH</name>
<accession>Q8GUH1</accession>
<accession>O80828</accession>
<organism>
    <name type="scientific">Arabidopsis thaliana</name>
    <name type="common">Mouse-ear cress</name>
    <dbReference type="NCBI Taxonomy" id="3702"/>
    <lineage>
        <taxon>Eukaryota</taxon>
        <taxon>Viridiplantae</taxon>
        <taxon>Streptophyta</taxon>
        <taxon>Embryophyta</taxon>
        <taxon>Tracheophyta</taxon>
        <taxon>Spermatophyta</taxon>
        <taxon>Magnoliopsida</taxon>
        <taxon>eudicotyledons</taxon>
        <taxon>Gunneridae</taxon>
        <taxon>Pentapetalae</taxon>
        <taxon>rosids</taxon>
        <taxon>malvids</taxon>
        <taxon>Brassicales</taxon>
        <taxon>Brassicaceae</taxon>
        <taxon>Camelineae</taxon>
        <taxon>Arabidopsis</taxon>
    </lineage>
</organism>
<proteinExistence type="evidence at transcript level"/>
<comment type="function">
    <text evidence="1">Functions as an E3 ubiquitin ligase.</text>
</comment>
<comment type="catalytic activity">
    <reaction>
        <text>L-seryl-[protein] + ATP = O-phospho-L-seryl-[protein] + ADP + H(+)</text>
        <dbReference type="Rhea" id="RHEA:17989"/>
        <dbReference type="Rhea" id="RHEA-COMP:9863"/>
        <dbReference type="Rhea" id="RHEA-COMP:11604"/>
        <dbReference type="ChEBI" id="CHEBI:15378"/>
        <dbReference type="ChEBI" id="CHEBI:29999"/>
        <dbReference type="ChEBI" id="CHEBI:30616"/>
        <dbReference type="ChEBI" id="CHEBI:83421"/>
        <dbReference type="ChEBI" id="CHEBI:456216"/>
    </reaction>
</comment>
<comment type="catalytic activity">
    <reaction>
        <text>L-threonyl-[protein] + ATP = O-phospho-L-threonyl-[protein] + ADP + H(+)</text>
        <dbReference type="Rhea" id="RHEA:46608"/>
        <dbReference type="Rhea" id="RHEA-COMP:11060"/>
        <dbReference type="Rhea" id="RHEA-COMP:11605"/>
        <dbReference type="ChEBI" id="CHEBI:15378"/>
        <dbReference type="ChEBI" id="CHEBI:30013"/>
        <dbReference type="ChEBI" id="CHEBI:30616"/>
        <dbReference type="ChEBI" id="CHEBI:61977"/>
        <dbReference type="ChEBI" id="CHEBI:456216"/>
    </reaction>
</comment>
<comment type="catalytic activity">
    <reaction>
        <text>S-ubiquitinyl-[E2 ubiquitin-conjugating enzyme]-L-cysteine + [acceptor protein]-L-lysine = [E2 ubiquitin-conjugating enzyme]-L-cysteine + N(6)-ubiquitinyl-[acceptor protein]-L-lysine.</text>
        <dbReference type="EC" id="2.3.2.27"/>
    </reaction>
</comment>
<comment type="pathway">
    <text>Protein modification; protein ubiquitination.</text>
</comment>
<comment type="similarity">
    <text evidence="3">Belongs to the protein kinase superfamily. Ser/Thr protein kinase family.</text>
</comment>
<comment type="sequence caution" evidence="6">
    <conflict type="erroneous gene model prediction">
        <sequence resource="EMBL-CDS" id="AAC28534"/>
    </conflict>
</comment>
<feature type="chain" id="PRO_0000322140" description="U-box domain-containing protein 33">
    <location>
        <begin position="1"/>
        <end position="834"/>
    </location>
</feature>
<feature type="domain" description="Protein kinase" evidence="3">
    <location>
        <begin position="481"/>
        <end position="744"/>
    </location>
</feature>
<feature type="domain" description="U-box">
    <location>
        <begin position="762"/>
        <end position="834"/>
    </location>
</feature>
<feature type="region of interest" description="Disordered" evidence="5">
    <location>
        <begin position="232"/>
        <end position="308"/>
    </location>
</feature>
<feature type="coiled-coil region" evidence="2">
    <location>
        <begin position="334"/>
        <end position="462"/>
    </location>
</feature>
<feature type="compositionally biased region" description="Polar residues" evidence="5">
    <location>
        <begin position="243"/>
        <end position="273"/>
    </location>
</feature>
<feature type="compositionally biased region" description="Polar residues" evidence="5">
    <location>
        <begin position="284"/>
        <end position="293"/>
    </location>
</feature>
<feature type="active site" description="Proton acceptor" evidence="3 4">
    <location>
        <position position="603"/>
    </location>
</feature>
<feature type="binding site" evidence="3">
    <location>
        <begin position="487"/>
        <end position="495"/>
    </location>
    <ligand>
        <name>ATP</name>
        <dbReference type="ChEBI" id="CHEBI:30616"/>
    </ligand>
</feature>
<feature type="binding site" evidence="3">
    <location>
        <position position="508"/>
    </location>
    <ligand>
        <name>ATP</name>
        <dbReference type="ChEBI" id="CHEBI:30616"/>
    </ligand>
</feature>
<feature type="sequence conflict" description="In Ref. 3; AAO00872 and 4; BAE99173." evidence="6" ref="3 4">
    <original>V</original>
    <variation>I</variation>
    <location>
        <position position="640"/>
    </location>
</feature>
<gene>
    <name type="primary">PUB33</name>
    <name type="ordered locus">At2g45910</name>
    <name type="ORF">F4I18.11</name>
</gene>
<reference key="1">
    <citation type="journal article" date="1999" name="Nature">
        <title>Sequence and analysis of chromosome 2 of the plant Arabidopsis thaliana.</title>
        <authorList>
            <person name="Lin X."/>
            <person name="Kaul S."/>
            <person name="Rounsley S.D."/>
            <person name="Shea T.P."/>
            <person name="Benito M.-I."/>
            <person name="Town C.D."/>
            <person name="Fujii C.Y."/>
            <person name="Mason T.M."/>
            <person name="Bowman C.L."/>
            <person name="Barnstead M.E."/>
            <person name="Feldblyum T.V."/>
            <person name="Buell C.R."/>
            <person name="Ketchum K.A."/>
            <person name="Lee J.J."/>
            <person name="Ronning C.M."/>
            <person name="Koo H.L."/>
            <person name="Moffat K.S."/>
            <person name="Cronin L.A."/>
            <person name="Shen M."/>
            <person name="Pai G."/>
            <person name="Van Aken S."/>
            <person name="Umayam L."/>
            <person name="Tallon L.J."/>
            <person name="Gill J.E."/>
            <person name="Adams M.D."/>
            <person name="Carrera A.J."/>
            <person name="Creasy T.H."/>
            <person name="Goodman H.M."/>
            <person name="Somerville C.R."/>
            <person name="Copenhaver G.P."/>
            <person name="Preuss D."/>
            <person name="Nierman W.C."/>
            <person name="White O."/>
            <person name="Eisen J.A."/>
            <person name="Salzberg S.L."/>
            <person name="Fraser C.M."/>
            <person name="Venter J.C."/>
        </authorList>
    </citation>
    <scope>NUCLEOTIDE SEQUENCE [LARGE SCALE GENOMIC DNA]</scope>
    <source>
        <strain>cv. Columbia</strain>
    </source>
</reference>
<reference key="2">
    <citation type="journal article" date="2017" name="Plant J.">
        <title>Araport11: a complete reannotation of the Arabidopsis thaliana reference genome.</title>
        <authorList>
            <person name="Cheng C.Y."/>
            <person name="Krishnakumar V."/>
            <person name="Chan A.P."/>
            <person name="Thibaud-Nissen F."/>
            <person name="Schobel S."/>
            <person name="Town C.D."/>
        </authorList>
    </citation>
    <scope>GENOME REANNOTATION</scope>
    <source>
        <strain>cv. Columbia</strain>
    </source>
</reference>
<reference key="3">
    <citation type="journal article" date="2003" name="Science">
        <title>Empirical analysis of transcriptional activity in the Arabidopsis genome.</title>
        <authorList>
            <person name="Yamada K."/>
            <person name="Lim J."/>
            <person name="Dale J.M."/>
            <person name="Chen H."/>
            <person name="Shinn P."/>
            <person name="Palm C.J."/>
            <person name="Southwick A.M."/>
            <person name="Wu H.C."/>
            <person name="Kim C.J."/>
            <person name="Nguyen M."/>
            <person name="Pham P.K."/>
            <person name="Cheuk R.F."/>
            <person name="Karlin-Newmann G."/>
            <person name="Liu S.X."/>
            <person name="Lam B."/>
            <person name="Sakano H."/>
            <person name="Wu T."/>
            <person name="Yu G."/>
            <person name="Miranda M."/>
            <person name="Quach H.L."/>
            <person name="Tripp M."/>
            <person name="Chang C.H."/>
            <person name="Lee J.M."/>
            <person name="Toriumi M.J."/>
            <person name="Chan M.M."/>
            <person name="Tang C.C."/>
            <person name="Onodera C.S."/>
            <person name="Deng J.M."/>
            <person name="Akiyama K."/>
            <person name="Ansari Y."/>
            <person name="Arakawa T."/>
            <person name="Banh J."/>
            <person name="Banno F."/>
            <person name="Bowser L."/>
            <person name="Brooks S.Y."/>
            <person name="Carninci P."/>
            <person name="Chao Q."/>
            <person name="Choy N."/>
            <person name="Enju A."/>
            <person name="Goldsmith A.D."/>
            <person name="Gurjal M."/>
            <person name="Hansen N.F."/>
            <person name="Hayashizaki Y."/>
            <person name="Johnson-Hopson C."/>
            <person name="Hsuan V.W."/>
            <person name="Iida K."/>
            <person name="Karnes M."/>
            <person name="Khan S."/>
            <person name="Koesema E."/>
            <person name="Ishida J."/>
            <person name="Jiang P.X."/>
            <person name="Jones T."/>
            <person name="Kawai J."/>
            <person name="Kamiya A."/>
            <person name="Meyers C."/>
            <person name="Nakajima M."/>
            <person name="Narusaka M."/>
            <person name="Seki M."/>
            <person name="Sakurai T."/>
            <person name="Satou M."/>
            <person name="Tamse R."/>
            <person name="Vaysberg M."/>
            <person name="Wallender E.K."/>
            <person name="Wong C."/>
            <person name="Yamamura Y."/>
            <person name="Yuan S."/>
            <person name="Shinozaki K."/>
            <person name="Davis R.W."/>
            <person name="Theologis A."/>
            <person name="Ecker J.R."/>
        </authorList>
    </citation>
    <scope>NUCLEOTIDE SEQUENCE [LARGE SCALE MRNA]</scope>
    <source>
        <strain>cv. Columbia</strain>
    </source>
</reference>
<reference key="4">
    <citation type="submission" date="2006-07" db="EMBL/GenBank/DDBJ databases">
        <title>Large-scale analysis of RIKEN Arabidopsis full-length (RAFL) cDNAs.</title>
        <authorList>
            <person name="Totoki Y."/>
            <person name="Seki M."/>
            <person name="Ishida J."/>
            <person name="Nakajima M."/>
            <person name="Enju A."/>
            <person name="Kamiya A."/>
            <person name="Narusaka M."/>
            <person name="Shin-i T."/>
            <person name="Nakagawa M."/>
            <person name="Sakamoto N."/>
            <person name="Oishi K."/>
            <person name="Kohara Y."/>
            <person name="Kobayashi M."/>
            <person name="Toyoda A."/>
            <person name="Sakaki Y."/>
            <person name="Sakurai T."/>
            <person name="Iida K."/>
            <person name="Akiyama K."/>
            <person name="Satou M."/>
            <person name="Toyoda T."/>
            <person name="Konagaya A."/>
            <person name="Carninci P."/>
            <person name="Kawai J."/>
            <person name="Hayashizaki Y."/>
            <person name="Shinozaki K."/>
        </authorList>
    </citation>
    <scope>NUCLEOTIDE SEQUENCE [LARGE SCALE MRNA]</scope>
    <source>
        <strain>cv. Columbia</strain>
    </source>
</reference>
<reference key="5">
    <citation type="journal article" date="2001" name="Trends Plant Sci.">
        <title>The U-box protein family in plants.</title>
        <authorList>
            <person name="Azevedo C."/>
            <person name="Santos-Rosa M.J."/>
            <person name="Shirasu K."/>
        </authorList>
    </citation>
    <scope>GENE FAMILY ORGANIZATION</scope>
    <scope>NOMENCLATURE</scope>
</reference>